<reference key="1">
    <citation type="journal article" date="2000" name="Nature">
        <title>Complete DNA sequence of a serogroup A strain of Neisseria meningitidis Z2491.</title>
        <authorList>
            <person name="Parkhill J."/>
            <person name="Achtman M."/>
            <person name="James K.D."/>
            <person name="Bentley S.D."/>
            <person name="Churcher C.M."/>
            <person name="Klee S.R."/>
            <person name="Morelli G."/>
            <person name="Basham D."/>
            <person name="Brown D."/>
            <person name="Chillingworth T."/>
            <person name="Davies R.M."/>
            <person name="Davis P."/>
            <person name="Devlin K."/>
            <person name="Feltwell T."/>
            <person name="Hamlin N."/>
            <person name="Holroyd S."/>
            <person name="Jagels K."/>
            <person name="Leather S."/>
            <person name="Moule S."/>
            <person name="Mungall K.L."/>
            <person name="Quail M.A."/>
            <person name="Rajandream M.A."/>
            <person name="Rutherford K.M."/>
            <person name="Simmonds M."/>
            <person name="Skelton J."/>
            <person name="Whitehead S."/>
            <person name="Spratt B.G."/>
            <person name="Barrell B.G."/>
        </authorList>
    </citation>
    <scope>NUCLEOTIDE SEQUENCE [LARGE SCALE GENOMIC DNA]</scope>
    <source>
        <strain>DSM 15465 / Z2491</strain>
    </source>
</reference>
<sequence length="948" mass="105192">MCNHHPKHSHGNDTIRIRGARTHNLKNVDLDIPRHKLVVVTGLSGSGKSSLAFDTLYAEGQRRYVESLSAYARQFLQMMDKPDVDLIEGLSPAISIEQKSTSHNPRSTVGTVTEIHDYLRLLYARVGTPYCPEHKLPLSSQTVSQMVDAVLKLPEDTRVMILAPAVRERKGEFVDFFADLQAQGFARVRVDGEVYQLDEVPKLEKNIKHNIDVVIDRVKVKADIKQRLAESFETALRHGNERALAMEMDSGEEHWFSARFACPVCSYSLPELEPRLFSFNNPMGSCPTCDGLGNTNFFDPEKVVAHPELSLASGAIDGWDKRNQFYFQMIQSLARHYGFDVQAAWETLPAKIKKVVLHGSGKEVIDFTYLSERGTTFNRSHAFEGIIPNLERRYRETDSETVREKLREYQNHRACPSCGGARLRKEARYVYVSGEPLHEVSAWPLTKTHRFFETLDLDGNKKQIAEKILKEITERLGFLINVGLDYLNLSRSAETLSGGEAQRIRLASQIGSGLTGVMYVLDEPSIGLHQRDNDRLLATLKRLRDLGNSVIVVEHDEDAIREADFVVDMGPGAGEHGGNVLIADTPENVAKCENSVTGQYLSGKKSIAVPSERTPVNPGRMLVLKGARGNNLKNVTLELPLGLITCITGVSGSGKSTLINDTLAKITARELNRAQEEPAPYDDIRGLEHLDKVINVDQSPIGRTPRSNPATYTGLFTPIRELFASVPLSRERGYNVGRFSFNVKGGRCEACQGDGVIKVEMHFLPDVYVPCEVCHGKRYNRETLEIQYKGKNISQVLDMTVEEACEFFDAVPTVSRKLQTLMDVGLGYIRLGQSATTLSGGEAQRVKLALELSKRDTGRTLYILDEPTTGLHFADIALLLEVIGRLKGKGNSIVIIEHNLDVIKTADWIVDLGPEGGDGGGRIIASGSPEEVAKVKGSYTGKYLKNIL</sequence>
<organism>
    <name type="scientific">Neisseria meningitidis serogroup A / serotype 4A (strain DSM 15465 / Z2491)</name>
    <dbReference type="NCBI Taxonomy" id="122587"/>
    <lineage>
        <taxon>Bacteria</taxon>
        <taxon>Pseudomonadati</taxon>
        <taxon>Pseudomonadota</taxon>
        <taxon>Betaproteobacteria</taxon>
        <taxon>Neisseriales</taxon>
        <taxon>Neisseriaceae</taxon>
        <taxon>Neisseria</taxon>
    </lineage>
</organism>
<accession>Q9JUS4</accession>
<accession>A1IRH9</accession>
<name>UVRA_NEIMA</name>
<keyword id="KW-0067">ATP-binding</keyword>
<keyword id="KW-0963">Cytoplasm</keyword>
<keyword id="KW-0227">DNA damage</keyword>
<keyword id="KW-0228">DNA excision</keyword>
<keyword id="KW-0234">DNA repair</keyword>
<keyword id="KW-0238">DNA-binding</keyword>
<keyword id="KW-0267">Excision nuclease</keyword>
<keyword id="KW-0479">Metal-binding</keyword>
<keyword id="KW-0547">Nucleotide-binding</keyword>
<keyword id="KW-0677">Repeat</keyword>
<keyword id="KW-0742">SOS response</keyword>
<keyword id="KW-0862">Zinc</keyword>
<keyword id="KW-0863">Zinc-finger</keyword>
<protein>
    <recommendedName>
        <fullName evidence="1">UvrABC system protein A</fullName>
        <shortName evidence="1">UvrA protein</shortName>
    </recommendedName>
    <alternativeName>
        <fullName evidence="1">Excinuclease ABC subunit A</fullName>
    </alternativeName>
</protein>
<comment type="function">
    <text evidence="1">The UvrABC repair system catalyzes the recognition and processing of DNA lesions. UvrA is an ATPase and a DNA-binding protein. A damage recognition complex composed of 2 UvrA and 2 UvrB subunits scans DNA for abnormalities. When the presence of a lesion has been verified by UvrB, the UvrA molecules dissociate.</text>
</comment>
<comment type="subunit">
    <text evidence="1">Forms a heterotetramer with UvrB during the search for lesions.</text>
</comment>
<comment type="subcellular location">
    <subcellularLocation>
        <location evidence="1">Cytoplasm</location>
    </subcellularLocation>
</comment>
<comment type="similarity">
    <text evidence="1">Belongs to the ABC transporter superfamily. UvrA family.</text>
</comment>
<feature type="chain" id="PRO_0000093072" description="UvrABC system protein A">
    <location>
        <begin position="1"/>
        <end position="948"/>
    </location>
</feature>
<feature type="domain" description="ABC transporter 1" evidence="1">
    <location>
        <begin position="319"/>
        <end position="596"/>
    </location>
</feature>
<feature type="domain" description="ABC transporter 2" evidence="1">
    <location>
        <begin position="616"/>
        <end position="945"/>
    </location>
</feature>
<feature type="zinc finger region" description="C4-type" evidence="1">
    <location>
        <begin position="262"/>
        <end position="289"/>
    </location>
</feature>
<feature type="zinc finger region" description="C4-type" evidence="1">
    <location>
        <begin position="748"/>
        <end position="774"/>
    </location>
</feature>
<feature type="binding site" evidence="1">
    <location>
        <begin position="42"/>
        <end position="49"/>
    </location>
    <ligand>
        <name>ATP</name>
        <dbReference type="ChEBI" id="CHEBI:30616"/>
    </ligand>
</feature>
<feature type="binding site" evidence="1">
    <location>
        <begin position="649"/>
        <end position="656"/>
    </location>
    <ligand>
        <name>ATP</name>
        <dbReference type="ChEBI" id="CHEBI:30616"/>
    </ligand>
</feature>
<gene>
    <name evidence="1" type="primary">uvrA</name>
    <name type="ordered locus">NMA1159</name>
</gene>
<dbReference type="EMBL" id="AL157959">
    <property type="protein sequence ID" value="CAM08365.1"/>
    <property type="molecule type" value="Genomic_DNA"/>
</dbReference>
<dbReference type="PIR" id="B81883">
    <property type="entry name" value="B81883"/>
</dbReference>
<dbReference type="RefSeq" id="WP_002244995.1">
    <property type="nucleotide sequence ID" value="NC_003116.1"/>
</dbReference>
<dbReference type="SMR" id="Q9JUS4"/>
<dbReference type="EnsemblBacteria" id="CAM08365">
    <property type="protein sequence ID" value="CAM08365"/>
    <property type="gene ID" value="NMA1159"/>
</dbReference>
<dbReference type="KEGG" id="nma:NMA1159"/>
<dbReference type="HOGENOM" id="CLU_001370_0_2_4"/>
<dbReference type="Proteomes" id="UP000000626">
    <property type="component" value="Chromosome"/>
</dbReference>
<dbReference type="GO" id="GO:0005737">
    <property type="term" value="C:cytoplasm"/>
    <property type="evidence" value="ECO:0007669"/>
    <property type="project" value="UniProtKB-SubCell"/>
</dbReference>
<dbReference type="GO" id="GO:0009380">
    <property type="term" value="C:excinuclease repair complex"/>
    <property type="evidence" value="ECO:0007669"/>
    <property type="project" value="InterPro"/>
</dbReference>
<dbReference type="GO" id="GO:0005524">
    <property type="term" value="F:ATP binding"/>
    <property type="evidence" value="ECO:0007669"/>
    <property type="project" value="UniProtKB-UniRule"/>
</dbReference>
<dbReference type="GO" id="GO:0016887">
    <property type="term" value="F:ATP hydrolysis activity"/>
    <property type="evidence" value="ECO:0007669"/>
    <property type="project" value="InterPro"/>
</dbReference>
<dbReference type="GO" id="GO:0003677">
    <property type="term" value="F:DNA binding"/>
    <property type="evidence" value="ECO:0007669"/>
    <property type="project" value="UniProtKB-UniRule"/>
</dbReference>
<dbReference type="GO" id="GO:0009381">
    <property type="term" value="F:excinuclease ABC activity"/>
    <property type="evidence" value="ECO:0007669"/>
    <property type="project" value="UniProtKB-UniRule"/>
</dbReference>
<dbReference type="GO" id="GO:0008270">
    <property type="term" value="F:zinc ion binding"/>
    <property type="evidence" value="ECO:0007669"/>
    <property type="project" value="UniProtKB-UniRule"/>
</dbReference>
<dbReference type="GO" id="GO:0006289">
    <property type="term" value="P:nucleotide-excision repair"/>
    <property type="evidence" value="ECO:0007669"/>
    <property type="project" value="UniProtKB-UniRule"/>
</dbReference>
<dbReference type="GO" id="GO:0009432">
    <property type="term" value="P:SOS response"/>
    <property type="evidence" value="ECO:0007669"/>
    <property type="project" value="UniProtKB-UniRule"/>
</dbReference>
<dbReference type="CDD" id="cd03270">
    <property type="entry name" value="ABC_UvrA_I"/>
    <property type="match status" value="1"/>
</dbReference>
<dbReference type="CDD" id="cd03271">
    <property type="entry name" value="ABC_UvrA_II"/>
    <property type="match status" value="1"/>
</dbReference>
<dbReference type="FunFam" id="1.10.8.280:FF:000001">
    <property type="entry name" value="UvrABC system protein A"/>
    <property type="match status" value="1"/>
</dbReference>
<dbReference type="FunFam" id="1.20.1580.10:FF:000002">
    <property type="entry name" value="UvrABC system protein A"/>
    <property type="match status" value="1"/>
</dbReference>
<dbReference type="FunFam" id="3.30.190.20:FF:000003">
    <property type="entry name" value="UvrABC system protein A"/>
    <property type="match status" value="1"/>
</dbReference>
<dbReference type="FunFam" id="3.40.50.300:FF:000028">
    <property type="entry name" value="UvrABC system protein A"/>
    <property type="match status" value="1"/>
</dbReference>
<dbReference type="Gene3D" id="1.10.8.280">
    <property type="entry name" value="ABC transporter ATPase domain-like"/>
    <property type="match status" value="1"/>
</dbReference>
<dbReference type="Gene3D" id="1.20.1580.10">
    <property type="entry name" value="ABC transporter ATPase like domain"/>
    <property type="match status" value="2"/>
</dbReference>
<dbReference type="Gene3D" id="3.30.1490.20">
    <property type="entry name" value="ATP-grasp fold, A domain"/>
    <property type="match status" value="1"/>
</dbReference>
<dbReference type="Gene3D" id="3.40.50.300">
    <property type="entry name" value="P-loop containing nucleotide triphosphate hydrolases"/>
    <property type="match status" value="2"/>
</dbReference>
<dbReference type="HAMAP" id="MF_00205">
    <property type="entry name" value="UvrA"/>
    <property type="match status" value="1"/>
</dbReference>
<dbReference type="InterPro" id="IPR003439">
    <property type="entry name" value="ABC_transporter-like_ATP-bd"/>
</dbReference>
<dbReference type="InterPro" id="IPR017871">
    <property type="entry name" value="ABC_transporter-like_CS"/>
</dbReference>
<dbReference type="InterPro" id="IPR013815">
    <property type="entry name" value="ATP_grasp_subdomain_1"/>
</dbReference>
<dbReference type="InterPro" id="IPR027417">
    <property type="entry name" value="P-loop_NTPase"/>
</dbReference>
<dbReference type="InterPro" id="IPR004602">
    <property type="entry name" value="UvrA"/>
</dbReference>
<dbReference type="InterPro" id="IPR041552">
    <property type="entry name" value="UvrA_DNA-bd"/>
</dbReference>
<dbReference type="InterPro" id="IPR041102">
    <property type="entry name" value="UvrA_inter"/>
</dbReference>
<dbReference type="NCBIfam" id="NF001503">
    <property type="entry name" value="PRK00349.1"/>
    <property type="match status" value="1"/>
</dbReference>
<dbReference type="NCBIfam" id="TIGR00630">
    <property type="entry name" value="uvra"/>
    <property type="match status" value="1"/>
</dbReference>
<dbReference type="PANTHER" id="PTHR43152">
    <property type="entry name" value="UVRABC SYSTEM PROTEIN A"/>
    <property type="match status" value="1"/>
</dbReference>
<dbReference type="PANTHER" id="PTHR43152:SF3">
    <property type="entry name" value="UVRABC SYSTEM PROTEIN A"/>
    <property type="match status" value="1"/>
</dbReference>
<dbReference type="Pfam" id="PF17755">
    <property type="entry name" value="UvrA_DNA-bind"/>
    <property type="match status" value="1"/>
</dbReference>
<dbReference type="Pfam" id="PF17760">
    <property type="entry name" value="UvrA_inter"/>
    <property type="match status" value="1"/>
</dbReference>
<dbReference type="SUPFAM" id="SSF52540">
    <property type="entry name" value="P-loop containing nucleoside triphosphate hydrolases"/>
    <property type="match status" value="2"/>
</dbReference>
<dbReference type="PROSITE" id="PS00211">
    <property type="entry name" value="ABC_TRANSPORTER_1"/>
    <property type="match status" value="2"/>
</dbReference>
<dbReference type="PROSITE" id="PS50893">
    <property type="entry name" value="ABC_TRANSPORTER_2"/>
    <property type="match status" value="1"/>
</dbReference>
<proteinExistence type="inferred from homology"/>
<evidence type="ECO:0000255" key="1">
    <source>
        <dbReference type="HAMAP-Rule" id="MF_00205"/>
    </source>
</evidence>